<evidence type="ECO:0000255" key="1">
    <source>
        <dbReference type="HAMAP-Rule" id="MF_00326"/>
    </source>
</evidence>
<evidence type="ECO:0000269" key="2">
    <source>
    </source>
</evidence>
<evidence type="ECO:0000305" key="3"/>
<evidence type="ECO:0007829" key="4">
    <source>
        <dbReference type="PDB" id="6Q8U"/>
    </source>
</evidence>
<keyword id="KW-0002">3D-structure</keyword>
<keyword id="KW-0963">Cytoplasm</keyword>
<keyword id="KW-1185">Reference proteome</keyword>
<keyword id="KW-0687">Ribonucleoprotein</keyword>
<keyword id="KW-0689">Ribosomal protein</keyword>
<keyword id="KW-0694">RNA-binding</keyword>
<keyword id="KW-0699">rRNA-binding</keyword>
<keyword id="KW-0819">tRNA processing</keyword>
<organism>
    <name type="scientific">Archaeoglobus fulgidus (strain ATCC 49558 / DSM 4304 / JCM 9628 / NBRC 100126 / VC-16)</name>
    <dbReference type="NCBI Taxonomy" id="224325"/>
    <lineage>
        <taxon>Archaea</taxon>
        <taxon>Methanobacteriati</taxon>
        <taxon>Methanobacteriota</taxon>
        <taxon>Archaeoglobi</taxon>
        <taxon>Archaeoglobales</taxon>
        <taxon>Archaeoglobaceae</taxon>
        <taxon>Archaeoglobus</taxon>
    </lineage>
</organism>
<gene>
    <name evidence="1" type="primary">rpl7ae</name>
    <name type="ordered locus">AF_0764</name>
</gene>
<sequence length="119" mass="13193">MYVRFEVPEDMQNEALSLLEKVRESGKVKKGTNETTKAVERGLAKLVYIAEDVDPPEIVAHLPLLCEEKNVPYIYVKSKNDLGRAVGIEVPCASAAIINEGELRKELGSLVEKIKGLQK</sequence>
<accession>O29494</accession>
<protein>
    <recommendedName>
        <fullName evidence="1">Large ribosomal subunit protein eL8</fullName>
    </recommendedName>
    <alternativeName>
        <fullName evidence="3">50S ribosomal protein L7Ae</fullName>
    </alternativeName>
    <alternativeName>
        <fullName evidence="1">Ribosomal protein L8e</fullName>
    </alternativeName>
</protein>
<reference key="1">
    <citation type="journal article" date="1997" name="Nature">
        <title>The complete genome sequence of the hyperthermophilic, sulphate-reducing archaeon Archaeoglobus fulgidus.</title>
        <authorList>
            <person name="Klenk H.-P."/>
            <person name="Clayton R.A."/>
            <person name="Tomb J.-F."/>
            <person name="White O."/>
            <person name="Nelson K.E."/>
            <person name="Ketchum K.A."/>
            <person name="Dodson R.J."/>
            <person name="Gwinn M.L."/>
            <person name="Hickey E.K."/>
            <person name="Peterson J.D."/>
            <person name="Richardson D.L."/>
            <person name="Kerlavage A.R."/>
            <person name="Graham D.E."/>
            <person name="Kyrpides N.C."/>
            <person name="Fleischmann R.D."/>
            <person name="Quackenbush J."/>
            <person name="Lee N.H."/>
            <person name="Sutton G.G."/>
            <person name="Gill S.R."/>
            <person name="Kirkness E.F."/>
            <person name="Dougherty B.A."/>
            <person name="McKenney K."/>
            <person name="Adams M.D."/>
            <person name="Loftus B.J."/>
            <person name="Peterson S.N."/>
            <person name="Reich C.I."/>
            <person name="McNeil L.K."/>
            <person name="Badger J.H."/>
            <person name="Glodek A."/>
            <person name="Zhou L."/>
            <person name="Overbeek R."/>
            <person name="Gocayne J.D."/>
            <person name="Weidman J.F."/>
            <person name="McDonald L.A."/>
            <person name="Utterback T.R."/>
            <person name="Cotton M.D."/>
            <person name="Spriggs T."/>
            <person name="Artiach P."/>
            <person name="Kaine B.P."/>
            <person name="Sykes S.M."/>
            <person name="Sadow P.W."/>
            <person name="D'Andrea K.P."/>
            <person name="Bowman C."/>
            <person name="Fujii C."/>
            <person name="Garland S.A."/>
            <person name="Mason T.M."/>
            <person name="Olsen G.J."/>
            <person name="Fraser C.M."/>
            <person name="Smith H.O."/>
            <person name="Woese C.R."/>
            <person name="Venter J.C."/>
        </authorList>
    </citation>
    <scope>NUCLEOTIDE SEQUENCE [LARGE SCALE GENOMIC DNA]</scope>
    <source>
        <strain>ATCC 49558 / DSM 4304 / JCM 9628 / NBRC 100126 / VC-16</strain>
    </source>
</reference>
<reference key="2">
    <citation type="journal article" date="2003" name="Nucleic Acids Res.">
        <title>Binding of L7Ae protein to the K-turn of archaeal snoRNAs: a shared RNA binding motif for C/D and H/ACA box snoRNAs in Archaea.</title>
        <authorList>
            <person name="Rozhdestvensky T.S."/>
            <person name="Tang T.H."/>
            <person name="Tchirkova I.V."/>
            <person name="Brosius J."/>
            <person name="Bachellerie J.-P."/>
            <person name="Huettenhofer A."/>
        </authorList>
    </citation>
    <scope>FUNCTION</scope>
</reference>
<reference key="3">
    <citation type="journal article" date="2004" name="Structure">
        <title>Molecular basis of box C/D RNA-protein interactions; cocrystal structure of archaeal L7Ae and a box C/D RNA.</title>
        <authorList>
            <person name="Moore T."/>
            <person name="Zhang Y."/>
            <person name="Fenley M.O."/>
            <person name="Li H."/>
        </authorList>
    </citation>
    <scope>X-RAY CRYSTALLOGRAPHY (2.7 ANGSTROMS)</scope>
</reference>
<feature type="chain" id="PRO_0000136789" description="Large ribosomal subunit protein eL8">
    <location>
        <begin position="1"/>
        <end position="119"/>
    </location>
</feature>
<feature type="helix" evidence="4">
    <location>
        <begin position="9"/>
        <end position="22"/>
    </location>
</feature>
<feature type="turn" evidence="4">
    <location>
        <begin position="23"/>
        <end position="25"/>
    </location>
</feature>
<feature type="strand" evidence="4">
    <location>
        <begin position="26"/>
        <end position="31"/>
    </location>
</feature>
<feature type="helix" evidence="4">
    <location>
        <begin position="32"/>
        <end position="40"/>
    </location>
</feature>
<feature type="strand" evidence="4">
    <location>
        <begin position="45"/>
        <end position="50"/>
    </location>
</feature>
<feature type="helix" evidence="4">
    <location>
        <begin position="56"/>
        <end position="58"/>
    </location>
</feature>
<feature type="turn" evidence="4">
    <location>
        <begin position="59"/>
        <end position="61"/>
    </location>
</feature>
<feature type="helix" evidence="4">
    <location>
        <begin position="62"/>
        <end position="69"/>
    </location>
</feature>
<feature type="strand" evidence="4">
    <location>
        <begin position="73"/>
        <end position="77"/>
    </location>
</feature>
<feature type="helix" evidence="4">
    <location>
        <begin position="79"/>
        <end position="85"/>
    </location>
</feature>
<feature type="strand" evidence="4">
    <location>
        <begin position="93"/>
        <end position="99"/>
    </location>
</feature>
<feature type="helix" evidence="4">
    <location>
        <begin position="101"/>
        <end position="103"/>
    </location>
</feature>
<feature type="helix" evidence="4">
    <location>
        <begin position="104"/>
        <end position="117"/>
    </location>
</feature>
<comment type="function">
    <text evidence="1 2">Multifunctional RNA-binding protein that recognizes the K-turn motif in ribosomal RNA, the RNA component of RNase P, box H/ACA, box C/D and box C'/D' sRNAs.</text>
</comment>
<comment type="subunit">
    <text evidence="1">Part of the 50S ribosomal subunit. Probably part of the RNase P complex.</text>
</comment>
<comment type="subcellular location">
    <subcellularLocation>
        <location evidence="1">Cytoplasm</location>
    </subcellularLocation>
</comment>
<comment type="similarity">
    <text evidence="1">Belongs to the eukaryotic ribosomal protein eL8 family.</text>
</comment>
<proteinExistence type="evidence at protein level"/>
<dbReference type="EMBL" id="AE000782">
    <property type="protein sequence ID" value="AAB90466.1"/>
    <property type="molecule type" value="Genomic_DNA"/>
</dbReference>
<dbReference type="PIR" id="D69345">
    <property type="entry name" value="D69345"/>
</dbReference>
<dbReference type="RefSeq" id="WP_010878267.1">
    <property type="nucleotide sequence ID" value="NC_000917.1"/>
</dbReference>
<dbReference type="PDB" id="1RLG">
    <property type="method" value="X-ray"/>
    <property type="resolution" value="2.70 A"/>
    <property type="chains" value="A/B=1-119"/>
</dbReference>
<dbReference type="PDB" id="4BW0">
    <property type="method" value="X-ray"/>
    <property type="resolution" value="2.33 A"/>
    <property type="chains" value="B=2-119"/>
</dbReference>
<dbReference type="PDB" id="4C4W">
    <property type="method" value="X-ray"/>
    <property type="resolution" value="2.95 A"/>
    <property type="chains" value="C/G=2-119"/>
</dbReference>
<dbReference type="PDB" id="5FJ4">
    <property type="method" value="X-ray"/>
    <property type="resolution" value="2.95 A"/>
    <property type="chains" value="C/G=5-119"/>
</dbReference>
<dbReference type="PDB" id="5G4U">
    <property type="method" value="X-ray"/>
    <property type="resolution" value="2.65 A"/>
    <property type="chains" value="C/D/G/H/K/L=2-119"/>
</dbReference>
<dbReference type="PDB" id="5G4V">
    <property type="method" value="X-ray"/>
    <property type="resolution" value="2.87 A"/>
    <property type="chains" value="C/D/G/H=2-119"/>
</dbReference>
<dbReference type="PDB" id="6HCT">
    <property type="method" value="X-ray"/>
    <property type="resolution" value="3.09 A"/>
    <property type="chains" value="C/D/G=2-117"/>
</dbReference>
<dbReference type="PDB" id="6Q8U">
    <property type="method" value="X-ray"/>
    <property type="resolution" value="1.99 A"/>
    <property type="chains" value="C/D=2-119"/>
</dbReference>
<dbReference type="PDBsum" id="1RLG"/>
<dbReference type="PDBsum" id="4BW0"/>
<dbReference type="PDBsum" id="4C4W"/>
<dbReference type="PDBsum" id="5FJ4"/>
<dbReference type="PDBsum" id="5G4U"/>
<dbReference type="PDBsum" id="5G4V"/>
<dbReference type="PDBsum" id="6HCT"/>
<dbReference type="PDBsum" id="6Q8U"/>
<dbReference type="SMR" id="O29494"/>
<dbReference type="STRING" id="224325.AF_0764"/>
<dbReference type="PaxDb" id="224325-AF_0764"/>
<dbReference type="EnsemblBacteria" id="AAB90466">
    <property type="protein sequence ID" value="AAB90466"/>
    <property type="gene ID" value="AF_0764"/>
</dbReference>
<dbReference type="GeneID" id="24794362"/>
<dbReference type="KEGG" id="afu:AF_0764"/>
<dbReference type="eggNOG" id="arCOG01751">
    <property type="taxonomic scope" value="Archaea"/>
</dbReference>
<dbReference type="HOGENOM" id="CLU_084513_4_0_2"/>
<dbReference type="OrthoDB" id="25810at2157"/>
<dbReference type="PhylomeDB" id="O29494"/>
<dbReference type="EvolutionaryTrace" id="O29494"/>
<dbReference type="Proteomes" id="UP000002199">
    <property type="component" value="Chromosome"/>
</dbReference>
<dbReference type="GO" id="GO:0005737">
    <property type="term" value="C:cytoplasm"/>
    <property type="evidence" value="ECO:0007669"/>
    <property type="project" value="UniProtKB-SubCell"/>
</dbReference>
<dbReference type="GO" id="GO:1990904">
    <property type="term" value="C:ribonucleoprotein complex"/>
    <property type="evidence" value="ECO:0007669"/>
    <property type="project" value="UniProtKB-KW"/>
</dbReference>
<dbReference type="GO" id="GO:0005840">
    <property type="term" value="C:ribosome"/>
    <property type="evidence" value="ECO:0007669"/>
    <property type="project" value="UniProtKB-KW"/>
</dbReference>
<dbReference type="GO" id="GO:0004526">
    <property type="term" value="F:ribonuclease P activity"/>
    <property type="evidence" value="ECO:0007669"/>
    <property type="project" value="UniProtKB-UniRule"/>
</dbReference>
<dbReference type="GO" id="GO:0019843">
    <property type="term" value="F:rRNA binding"/>
    <property type="evidence" value="ECO:0007669"/>
    <property type="project" value="UniProtKB-KW"/>
</dbReference>
<dbReference type="GO" id="GO:0003735">
    <property type="term" value="F:structural constituent of ribosome"/>
    <property type="evidence" value="ECO:0007669"/>
    <property type="project" value="InterPro"/>
</dbReference>
<dbReference type="GO" id="GO:0042254">
    <property type="term" value="P:ribosome biogenesis"/>
    <property type="evidence" value="ECO:0007669"/>
    <property type="project" value="InterPro"/>
</dbReference>
<dbReference type="GO" id="GO:0006412">
    <property type="term" value="P:translation"/>
    <property type="evidence" value="ECO:0007669"/>
    <property type="project" value="UniProtKB-UniRule"/>
</dbReference>
<dbReference type="GO" id="GO:0001682">
    <property type="term" value="P:tRNA 5'-leader removal"/>
    <property type="evidence" value="ECO:0007669"/>
    <property type="project" value="UniProtKB-UniRule"/>
</dbReference>
<dbReference type="FunFam" id="3.30.1330.30:FF:000020">
    <property type="entry name" value="50S ribosomal protein L7Ae"/>
    <property type="match status" value="1"/>
</dbReference>
<dbReference type="Gene3D" id="3.30.1330.30">
    <property type="match status" value="1"/>
</dbReference>
<dbReference type="HAMAP" id="MF_00326">
    <property type="entry name" value="Ribosomal_eL8"/>
    <property type="match status" value="1"/>
</dbReference>
<dbReference type="InterPro" id="IPR050257">
    <property type="entry name" value="eL8/uL1-like"/>
</dbReference>
<dbReference type="InterPro" id="IPR029064">
    <property type="entry name" value="Ribosomal_eL30-like_sf"/>
</dbReference>
<dbReference type="InterPro" id="IPR004037">
    <property type="entry name" value="Ribosomal_eL8-like_CS"/>
</dbReference>
<dbReference type="InterPro" id="IPR004038">
    <property type="entry name" value="Ribosomal_eL8/eL30/eS12/Gad45"/>
</dbReference>
<dbReference type="InterPro" id="IPR018492">
    <property type="entry name" value="Ribosomal_eL8/Nhp2"/>
</dbReference>
<dbReference type="InterPro" id="IPR022481">
    <property type="entry name" value="Ribosomal_eL8_arc"/>
</dbReference>
<dbReference type="NCBIfam" id="TIGR03677">
    <property type="entry name" value="eL8_ribo"/>
    <property type="match status" value="1"/>
</dbReference>
<dbReference type="PANTHER" id="PTHR23105">
    <property type="entry name" value="RIBOSOMAL PROTEIN L7AE FAMILY MEMBER"/>
    <property type="match status" value="1"/>
</dbReference>
<dbReference type="Pfam" id="PF01248">
    <property type="entry name" value="Ribosomal_L7Ae"/>
    <property type="match status" value="1"/>
</dbReference>
<dbReference type="PRINTS" id="PR00881">
    <property type="entry name" value="L7ARS6FAMILY"/>
</dbReference>
<dbReference type="PRINTS" id="PR00884">
    <property type="entry name" value="RIBOSOMALHS6"/>
</dbReference>
<dbReference type="SUPFAM" id="SSF55315">
    <property type="entry name" value="L30e-like"/>
    <property type="match status" value="1"/>
</dbReference>
<dbReference type="PROSITE" id="PS01082">
    <property type="entry name" value="RIBOSOMAL_L7AE"/>
    <property type="match status" value="1"/>
</dbReference>
<name>RL7A_ARCFU</name>